<proteinExistence type="inferred from homology"/>
<comment type="function">
    <text evidence="1">Produces ATP from ADP in the presence of a proton gradient across the membrane. The catalytic sites are hosted primarily by the beta subunits.</text>
</comment>
<comment type="catalytic activity">
    <reaction evidence="1">
        <text>ATP + H2O + 4 H(+)(in) = ADP + phosphate + 5 H(+)(out)</text>
        <dbReference type="Rhea" id="RHEA:57720"/>
        <dbReference type="ChEBI" id="CHEBI:15377"/>
        <dbReference type="ChEBI" id="CHEBI:15378"/>
        <dbReference type="ChEBI" id="CHEBI:30616"/>
        <dbReference type="ChEBI" id="CHEBI:43474"/>
        <dbReference type="ChEBI" id="CHEBI:456216"/>
        <dbReference type="EC" id="7.1.2.2"/>
    </reaction>
</comment>
<comment type="subunit">
    <text evidence="1">F-type ATPases have 2 components, CF(1) - the catalytic core - and CF(0) - the membrane proton channel. CF(1) has five subunits: alpha(3), beta(3), gamma(1), delta(1), epsilon(1). CF(0) has three main subunits: a(1), b(2) and c(9-12). The alpha and beta chains form an alternating ring which encloses part of the gamma chain. CF(1) is attached to CF(0) by a central stalk formed by the gamma and epsilon chains, while a peripheral stalk is formed by the delta and b chains.</text>
</comment>
<comment type="subcellular location">
    <subcellularLocation>
        <location evidence="1">Cell inner membrane</location>
        <topology evidence="1">Peripheral membrane protein</topology>
    </subcellularLocation>
</comment>
<comment type="similarity">
    <text evidence="1">Belongs to the ATPase alpha/beta chains family.</text>
</comment>
<accession>A8ZUA1</accession>
<dbReference type="EC" id="7.1.2.2" evidence="1"/>
<dbReference type="EMBL" id="CP000859">
    <property type="protein sequence ID" value="ABW66413.1"/>
    <property type="molecule type" value="Genomic_DNA"/>
</dbReference>
<dbReference type="RefSeq" id="WP_012174032.1">
    <property type="nucleotide sequence ID" value="NC_009943.1"/>
</dbReference>
<dbReference type="SMR" id="A8ZUA1"/>
<dbReference type="STRING" id="96561.Dole_0603"/>
<dbReference type="KEGG" id="dol:Dole_0603"/>
<dbReference type="eggNOG" id="COG0055">
    <property type="taxonomic scope" value="Bacteria"/>
</dbReference>
<dbReference type="HOGENOM" id="CLU_022398_0_2_7"/>
<dbReference type="OrthoDB" id="9801639at2"/>
<dbReference type="Proteomes" id="UP000008561">
    <property type="component" value="Chromosome"/>
</dbReference>
<dbReference type="GO" id="GO:0005886">
    <property type="term" value="C:plasma membrane"/>
    <property type="evidence" value="ECO:0007669"/>
    <property type="project" value="UniProtKB-SubCell"/>
</dbReference>
<dbReference type="GO" id="GO:0045259">
    <property type="term" value="C:proton-transporting ATP synthase complex"/>
    <property type="evidence" value="ECO:0007669"/>
    <property type="project" value="UniProtKB-KW"/>
</dbReference>
<dbReference type="GO" id="GO:0005524">
    <property type="term" value="F:ATP binding"/>
    <property type="evidence" value="ECO:0007669"/>
    <property type="project" value="UniProtKB-UniRule"/>
</dbReference>
<dbReference type="GO" id="GO:0016887">
    <property type="term" value="F:ATP hydrolysis activity"/>
    <property type="evidence" value="ECO:0007669"/>
    <property type="project" value="InterPro"/>
</dbReference>
<dbReference type="GO" id="GO:0046933">
    <property type="term" value="F:proton-transporting ATP synthase activity, rotational mechanism"/>
    <property type="evidence" value="ECO:0007669"/>
    <property type="project" value="UniProtKB-UniRule"/>
</dbReference>
<dbReference type="CDD" id="cd18110">
    <property type="entry name" value="ATP-synt_F1_beta_C"/>
    <property type="match status" value="1"/>
</dbReference>
<dbReference type="CDD" id="cd18115">
    <property type="entry name" value="ATP-synt_F1_beta_N"/>
    <property type="match status" value="1"/>
</dbReference>
<dbReference type="CDD" id="cd01133">
    <property type="entry name" value="F1-ATPase_beta_CD"/>
    <property type="match status" value="1"/>
</dbReference>
<dbReference type="FunFam" id="1.10.1140.10:FF:000001">
    <property type="entry name" value="ATP synthase subunit beta"/>
    <property type="match status" value="1"/>
</dbReference>
<dbReference type="FunFam" id="2.40.10.170:FF:000005">
    <property type="entry name" value="ATP synthase subunit beta"/>
    <property type="match status" value="1"/>
</dbReference>
<dbReference type="FunFam" id="3.40.50.300:FF:000026">
    <property type="entry name" value="ATP synthase subunit beta"/>
    <property type="match status" value="1"/>
</dbReference>
<dbReference type="Gene3D" id="2.40.10.170">
    <property type="match status" value="1"/>
</dbReference>
<dbReference type="Gene3D" id="1.10.1140.10">
    <property type="entry name" value="Bovine Mitochondrial F1-atpase, Atp Synthase Beta Chain, Chain D, domain 3"/>
    <property type="match status" value="1"/>
</dbReference>
<dbReference type="Gene3D" id="3.40.50.300">
    <property type="entry name" value="P-loop containing nucleotide triphosphate hydrolases"/>
    <property type="match status" value="1"/>
</dbReference>
<dbReference type="HAMAP" id="MF_01347">
    <property type="entry name" value="ATP_synth_beta_bact"/>
    <property type="match status" value="1"/>
</dbReference>
<dbReference type="InterPro" id="IPR003593">
    <property type="entry name" value="AAA+_ATPase"/>
</dbReference>
<dbReference type="InterPro" id="IPR055190">
    <property type="entry name" value="ATP-synt_VA_C"/>
</dbReference>
<dbReference type="InterPro" id="IPR005722">
    <property type="entry name" value="ATP_synth_F1_bsu"/>
</dbReference>
<dbReference type="InterPro" id="IPR020003">
    <property type="entry name" value="ATPase_a/bsu_AS"/>
</dbReference>
<dbReference type="InterPro" id="IPR050053">
    <property type="entry name" value="ATPase_alpha/beta_chains"/>
</dbReference>
<dbReference type="InterPro" id="IPR004100">
    <property type="entry name" value="ATPase_F1/V1/A1_a/bsu_N"/>
</dbReference>
<dbReference type="InterPro" id="IPR036121">
    <property type="entry name" value="ATPase_F1/V1/A1_a/bsu_N_sf"/>
</dbReference>
<dbReference type="InterPro" id="IPR000194">
    <property type="entry name" value="ATPase_F1/V1/A1_a/bsu_nucl-bd"/>
</dbReference>
<dbReference type="InterPro" id="IPR024034">
    <property type="entry name" value="ATPase_F1/V1_b/a_C"/>
</dbReference>
<dbReference type="InterPro" id="IPR027417">
    <property type="entry name" value="P-loop_NTPase"/>
</dbReference>
<dbReference type="NCBIfam" id="TIGR01039">
    <property type="entry name" value="atpD"/>
    <property type="match status" value="1"/>
</dbReference>
<dbReference type="PANTHER" id="PTHR15184">
    <property type="entry name" value="ATP SYNTHASE"/>
    <property type="match status" value="1"/>
</dbReference>
<dbReference type="PANTHER" id="PTHR15184:SF71">
    <property type="entry name" value="ATP SYNTHASE SUBUNIT BETA, MITOCHONDRIAL"/>
    <property type="match status" value="1"/>
</dbReference>
<dbReference type="Pfam" id="PF00006">
    <property type="entry name" value="ATP-synt_ab"/>
    <property type="match status" value="1"/>
</dbReference>
<dbReference type="Pfam" id="PF02874">
    <property type="entry name" value="ATP-synt_ab_N"/>
    <property type="match status" value="1"/>
</dbReference>
<dbReference type="Pfam" id="PF22919">
    <property type="entry name" value="ATP-synt_VA_C"/>
    <property type="match status" value="1"/>
</dbReference>
<dbReference type="SMART" id="SM00382">
    <property type="entry name" value="AAA"/>
    <property type="match status" value="1"/>
</dbReference>
<dbReference type="SUPFAM" id="SSF47917">
    <property type="entry name" value="C-terminal domain of alpha and beta subunits of F1 ATP synthase"/>
    <property type="match status" value="1"/>
</dbReference>
<dbReference type="SUPFAM" id="SSF50615">
    <property type="entry name" value="N-terminal domain of alpha and beta subunits of F1 ATP synthase"/>
    <property type="match status" value="1"/>
</dbReference>
<dbReference type="SUPFAM" id="SSF52540">
    <property type="entry name" value="P-loop containing nucleoside triphosphate hydrolases"/>
    <property type="match status" value="1"/>
</dbReference>
<dbReference type="PROSITE" id="PS00152">
    <property type="entry name" value="ATPASE_ALPHA_BETA"/>
    <property type="match status" value="1"/>
</dbReference>
<reference key="1">
    <citation type="submission" date="2007-10" db="EMBL/GenBank/DDBJ databases">
        <title>Complete sequence of Desulfococcus oleovorans Hxd3.</title>
        <authorList>
            <consortium name="US DOE Joint Genome Institute"/>
            <person name="Copeland A."/>
            <person name="Lucas S."/>
            <person name="Lapidus A."/>
            <person name="Barry K."/>
            <person name="Glavina del Rio T."/>
            <person name="Dalin E."/>
            <person name="Tice H."/>
            <person name="Pitluck S."/>
            <person name="Kiss H."/>
            <person name="Brettin T."/>
            <person name="Bruce D."/>
            <person name="Detter J.C."/>
            <person name="Han C."/>
            <person name="Schmutz J."/>
            <person name="Larimer F."/>
            <person name="Land M."/>
            <person name="Hauser L."/>
            <person name="Kyrpides N."/>
            <person name="Kim E."/>
            <person name="Wawrik B."/>
            <person name="Richardson P."/>
        </authorList>
    </citation>
    <scope>NUCLEOTIDE SEQUENCE [LARGE SCALE GENOMIC DNA]</scope>
    <source>
        <strain>DSM 6200 / JCM 39069 / Hxd3</strain>
    </source>
</reference>
<sequence length="467" mass="50216">MSDNIGKVVQVMGPVVDVEFEPGKLPAILTALLITNTVINDEADNLVVEVAQHLGDNVVRTIAMDVTDGLVRGMPVKDTGAPITMPVGAASLGRVLNVVGKPVDGLGPVSREKTMPIHRPAPLFTEQDTSVNVLETGIKVIDLLVPFPRGGKMGLFGGAGVGKTVIMMEMVNNIAMQHGGISVFAGVGERTREGNDLYHEMKDSGVLPKAALIYGQMTEPPGARARVALSALTCAEYFRDVEGQDVLIFIDNIFRFTQAGAEVSALLGRIPSAVGYQPTLAVDLGGLQERITSTDKGSITAVQCVYVPADDLTDPAPATTFAHLDGTVVLSRQIAELGIYPSVDPLDSTSRILDAAYIGEEHYRVAREVQQTLQKYKELQDIIAILGMDELSDEDKVTVERARKLQRFLSQPFHVAEVFTGKPGSYVKIEDTVRSFKEICDGKHDDLPESAFYMVGSIEEAVAKAKG</sequence>
<name>ATPB_DESOH</name>
<gene>
    <name evidence="1" type="primary">atpD</name>
    <name type="ordered locus">Dole_0603</name>
</gene>
<evidence type="ECO:0000255" key="1">
    <source>
        <dbReference type="HAMAP-Rule" id="MF_01347"/>
    </source>
</evidence>
<feature type="chain" id="PRO_1000166587" description="ATP synthase subunit beta">
    <location>
        <begin position="1"/>
        <end position="467"/>
    </location>
</feature>
<feature type="binding site" evidence="1">
    <location>
        <begin position="157"/>
        <end position="164"/>
    </location>
    <ligand>
        <name>ATP</name>
        <dbReference type="ChEBI" id="CHEBI:30616"/>
    </ligand>
</feature>
<protein>
    <recommendedName>
        <fullName evidence="1">ATP synthase subunit beta</fullName>
        <ecNumber evidence="1">7.1.2.2</ecNumber>
    </recommendedName>
    <alternativeName>
        <fullName evidence="1">ATP synthase F1 sector subunit beta</fullName>
    </alternativeName>
    <alternativeName>
        <fullName evidence="1">F-ATPase subunit beta</fullName>
    </alternativeName>
</protein>
<organism>
    <name type="scientific">Desulfosudis oleivorans (strain DSM 6200 / JCM 39069 / Hxd3)</name>
    <name type="common">Desulfococcus oleovorans</name>
    <dbReference type="NCBI Taxonomy" id="96561"/>
    <lineage>
        <taxon>Bacteria</taxon>
        <taxon>Pseudomonadati</taxon>
        <taxon>Thermodesulfobacteriota</taxon>
        <taxon>Desulfobacteria</taxon>
        <taxon>Desulfobacterales</taxon>
        <taxon>Desulfosudaceae</taxon>
        <taxon>Desulfosudis</taxon>
    </lineage>
</organism>
<keyword id="KW-0066">ATP synthesis</keyword>
<keyword id="KW-0067">ATP-binding</keyword>
<keyword id="KW-0997">Cell inner membrane</keyword>
<keyword id="KW-1003">Cell membrane</keyword>
<keyword id="KW-0139">CF(1)</keyword>
<keyword id="KW-0375">Hydrogen ion transport</keyword>
<keyword id="KW-0406">Ion transport</keyword>
<keyword id="KW-0472">Membrane</keyword>
<keyword id="KW-0547">Nucleotide-binding</keyword>
<keyword id="KW-1185">Reference proteome</keyword>
<keyword id="KW-1278">Translocase</keyword>
<keyword id="KW-0813">Transport</keyword>